<dbReference type="EC" id="4.1.1.37" evidence="1"/>
<dbReference type="EMBL" id="CU459141">
    <property type="protein sequence ID" value="CAM86034.1"/>
    <property type="molecule type" value="Genomic_DNA"/>
</dbReference>
<dbReference type="RefSeq" id="WP_000209397.1">
    <property type="nucleotide sequence ID" value="NZ_JBDGFB010000018.1"/>
</dbReference>
<dbReference type="SMR" id="B0VBT2"/>
<dbReference type="EnsemblBacteria" id="CAM86034">
    <property type="protein sequence ID" value="CAM86034"/>
    <property type="gene ID" value="ABAYE1106"/>
</dbReference>
<dbReference type="GeneID" id="92894697"/>
<dbReference type="KEGG" id="aby:ABAYE1106"/>
<dbReference type="HOGENOM" id="CLU_040933_0_0_6"/>
<dbReference type="UniPathway" id="UPA00251">
    <property type="reaction ID" value="UER00321"/>
</dbReference>
<dbReference type="GO" id="GO:0005829">
    <property type="term" value="C:cytosol"/>
    <property type="evidence" value="ECO:0007669"/>
    <property type="project" value="TreeGrafter"/>
</dbReference>
<dbReference type="GO" id="GO:0004853">
    <property type="term" value="F:uroporphyrinogen decarboxylase activity"/>
    <property type="evidence" value="ECO:0007669"/>
    <property type="project" value="UniProtKB-UniRule"/>
</dbReference>
<dbReference type="GO" id="GO:0019353">
    <property type="term" value="P:protoporphyrinogen IX biosynthetic process from glutamate"/>
    <property type="evidence" value="ECO:0007669"/>
    <property type="project" value="TreeGrafter"/>
</dbReference>
<dbReference type="CDD" id="cd00717">
    <property type="entry name" value="URO-D"/>
    <property type="match status" value="1"/>
</dbReference>
<dbReference type="FunFam" id="3.20.20.210:FF:000001">
    <property type="entry name" value="Uroporphyrinogen decarboxylase"/>
    <property type="match status" value="1"/>
</dbReference>
<dbReference type="Gene3D" id="3.20.20.210">
    <property type="match status" value="1"/>
</dbReference>
<dbReference type="HAMAP" id="MF_00218">
    <property type="entry name" value="URO_D"/>
    <property type="match status" value="1"/>
</dbReference>
<dbReference type="InterPro" id="IPR038071">
    <property type="entry name" value="UROD/MetE-like_sf"/>
</dbReference>
<dbReference type="InterPro" id="IPR006361">
    <property type="entry name" value="Uroporphyrinogen_deCO2ase_HemE"/>
</dbReference>
<dbReference type="InterPro" id="IPR000257">
    <property type="entry name" value="Uroporphyrinogen_deCOase"/>
</dbReference>
<dbReference type="NCBIfam" id="TIGR01464">
    <property type="entry name" value="hemE"/>
    <property type="match status" value="1"/>
</dbReference>
<dbReference type="PANTHER" id="PTHR21091">
    <property type="entry name" value="METHYLTETRAHYDROFOLATE:HOMOCYSTEINE METHYLTRANSFERASE RELATED"/>
    <property type="match status" value="1"/>
</dbReference>
<dbReference type="PANTHER" id="PTHR21091:SF169">
    <property type="entry name" value="UROPORPHYRINOGEN DECARBOXYLASE"/>
    <property type="match status" value="1"/>
</dbReference>
<dbReference type="Pfam" id="PF01208">
    <property type="entry name" value="URO-D"/>
    <property type="match status" value="1"/>
</dbReference>
<dbReference type="SUPFAM" id="SSF51726">
    <property type="entry name" value="UROD/MetE-like"/>
    <property type="match status" value="1"/>
</dbReference>
<dbReference type="PROSITE" id="PS00906">
    <property type="entry name" value="UROD_1"/>
    <property type="match status" value="1"/>
</dbReference>
<dbReference type="PROSITE" id="PS00907">
    <property type="entry name" value="UROD_2"/>
    <property type="match status" value="1"/>
</dbReference>
<name>DCUP_ACIBY</name>
<sequence>MTTLKNDRFLRALLREPVDTTPIWMMRQAGRYLPEYRETRSKAGDFLSLCKNTEFACEVTLQPLRRYDLDAAILFSDILTIPDALGLGLYFETGEGPKFHKTVRTEQDVANLPKLNAKADLDYVMNAVSTIRSALGGQVPLIGFSGSPWTLATYMVEGGSSKEFRFTKQMMYAQPEVLHALLDHLADSVIDYLNAQIDAGAQAIQIFDSWGGALAHREYVEFSLNYMKKIIAGLQREKDGRRIPVIVFTKGGGQWLEPMITTGADALGLDWTTPLNTARTTVAGRVALQGNLDPAVLYGSAASIEKAVKAMLDDAYANGEKTGYVANLGHGITQWVDPAQPKIFVDTVHEYSAKYLG</sequence>
<accession>B0VBT2</accession>
<feature type="chain" id="PRO_1000099969" description="Uroporphyrinogen decarboxylase">
    <location>
        <begin position="1"/>
        <end position="357"/>
    </location>
</feature>
<feature type="binding site" evidence="1">
    <location>
        <begin position="27"/>
        <end position="31"/>
    </location>
    <ligand>
        <name>substrate</name>
    </ligand>
</feature>
<feature type="binding site" evidence="1">
    <location>
        <position position="77"/>
    </location>
    <ligand>
        <name>substrate</name>
    </ligand>
</feature>
<feature type="binding site" evidence="1">
    <location>
        <position position="154"/>
    </location>
    <ligand>
        <name>substrate</name>
    </ligand>
</feature>
<feature type="binding site" evidence="1">
    <location>
        <position position="209"/>
    </location>
    <ligand>
        <name>substrate</name>
    </ligand>
</feature>
<feature type="binding site" evidence="1">
    <location>
        <position position="330"/>
    </location>
    <ligand>
        <name>substrate</name>
    </ligand>
</feature>
<feature type="site" description="Transition state stabilizer" evidence="1">
    <location>
        <position position="77"/>
    </location>
</feature>
<protein>
    <recommendedName>
        <fullName evidence="1">Uroporphyrinogen decarboxylase</fullName>
        <shortName evidence="1">UPD</shortName>
        <shortName evidence="1">URO-D</shortName>
        <ecNumber evidence="1">4.1.1.37</ecNumber>
    </recommendedName>
</protein>
<comment type="function">
    <text evidence="1">Catalyzes the decarboxylation of four acetate groups of uroporphyrinogen-III to yield coproporphyrinogen-III.</text>
</comment>
<comment type="catalytic activity">
    <reaction evidence="1">
        <text>uroporphyrinogen III + 4 H(+) = coproporphyrinogen III + 4 CO2</text>
        <dbReference type="Rhea" id="RHEA:19865"/>
        <dbReference type="ChEBI" id="CHEBI:15378"/>
        <dbReference type="ChEBI" id="CHEBI:16526"/>
        <dbReference type="ChEBI" id="CHEBI:57308"/>
        <dbReference type="ChEBI" id="CHEBI:57309"/>
        <dbReference type="EC" id="4.1.1.37"/>
    </reaction>
</comment>
<comment type="pathway">
    <text evidence="1">Porphyrin-containing compound metabolism; protoporphyrin-IX biosynthesis; coproporphyrinogen-III from 5-aminolevulinate: step 4/4.</text>
</comment>
<comment type="subunit">
    <text evidence="1">Homodimer.</text>
</comment>
<comment type="subcellular location">
    <subcellularLocation>
        <location evidence="1">Cytoplasm</location>
    </subcellularLocation>
</comment>
<comment type="similarity">
    <text evidence="1">Belongs to the uroporphyrinogen decarboxylase family.</text>
</comment>
<evidence type="ECO:0000255" key="1">
    <source>
        <dbReference type="HAMAP-Rule" id="MF_00218"/>
    </source>
</evidence>
<reference key="1">
    <citation type="journal article" date="2008" name="PLoS ONE">
        <title>Comparative analysis of Acinetobacters: three genomes for three lifestyles.</title>
        <authorList>
            <person name="Vallenet D."/>
            <person name="Nordmann P."/>
            <person name="Barbe V."/>
            <person name="Poirel L."/>
            <person name="Mangenot S."/>
            <person name="Bataille E."/>
            <person name="Dossat C."/>
            <person name="Gas S."/>
            <person name="Kreimeyer A."/>
            <person name="Lenoble P."/>
            <person name="Oztas S."/>
            <person name="Poulain J."/>
            <person name="Segurens B."/>
            <person name="Robert C."/>
            <person name="Abergel C."/>
            <person name="Claverie J.-M."/>
            <person name="Raoult D."/>
            <person name="Medigue C."/>
            <person name="Weissenbach J."/>
            <person name="Cruveiller S."/>
        </authorList>
    </citation>
    <scope>NUCLEOTIDE SEQUENCE [LARGE SCALE GENOMIC DNA]</scope>
    <source>
        <strain>AYE</strain>
    </source>
</reference>
<organism>
    <name type="scientific">Acinetobacter baumannii (strain AYE)</name>
    <dbReference type="NCBI Taxonomy" id="509173"/>
    <lineage>
        <taxon>Bacteria</taxon>
        <taxon>Pseudomonadati</taxon>
        <taxon>Pseudomonadota</taxon>
        <taxon>Gammaproteobacteria</taxon>
        <taxon>Moraxellales</taxon>
        <taxon>Moraxellaceae</taxon>
        <taxon>Acinetobacter</taxon>
        <taxon>Acinetobacter calcoaceticus/baumannii complex</taxon>
    </lineage>
</organism>
<keyword id="KW-0963">Cytoplasm</keyword>
<keyword id="KW-0210">Decarboxylase</keyword>
<keyword id="KW-0456">Lyase</keyword>
<keyword id="KW-0627">Porphyrin biosynthesis</keyword>
<proteinExistence type="inferred from homology"/>
<gene>
    <name evidence="1" type="primary">hemE</name>
    <name type="ordered locus">ABAYE1106</name>
</gene>